<sequence>MTDLSDIRREYAKGGLRRADLPQNPMDLFELWMTQARDAELSDPTAMCVATVDEHGQPFQRIVLLKRFDDTGFVFFTNLGSRKAQQIAANNKVSLHFPWHPLERQVSVLGEAQALSTAEVLKYFMTRPKDSQIAAWVSQQSSKLSARQVLEGKFFEMKAKFAKGDVPLPSFWGGYLVRPSSIEFWQGGEHRLHDRFIYARHDAEWEIDRLAP</sequence>
<accession>B8EAI0</accession>
<protein>
    <recommendedName>
        <fullName evidence="1">Pyridoxine/pyridoxamine 5'-phosphate oxidase</fullName>
        <ecNumber evidence="1">1.4.3.5</ecNumber>
    </recommendedName>
    <alternativeName>
        <fullName evidence="1">PNP/PMP oxidase</fullName>
        <shortName evidence="1">PNPOx</shortName>
    </alternativeName>
    <alternativeName>
        <fullName evidence="1">Pyridoxal 5'-phosphate synthase</fullName>
    </alternativeName>
</protein>
<reference key="1">
    <citation type="submission" date="2008-12" db="EMBL/GenBank/DDBJ databases">
        <title>Complete sequence of chromosome of Shewanella baltica OS223.</title>
        <authorList>
            <consortium name="US DOE Joint Genome Institute"/>
            <person name="Lucas S."/>
            <person name="Copeland A."/>
            <person name="Lapidus A."/>
            <person name="Glavina del Rio T."/>
            <person name="Dalin E."/>
            <person name="Tice H."/>
            <person name="Bruce D."/>
            <person name="Goodwin L."/>
            <person name="Pitluck S."/>
            <person name="Chertkov O."/>
            <person name="Meincke L."/>
            <person name="Brettin T."/>
            <person name="Detter J.C."/>
            <person name="Han C."/>
            <person name="Kuske C.R."/>
            <person name="Larimer F."/>
            <person name="Land M."/>
            <person name="Hauser L."/>
            <person name="Kyrpides N."/>
            <person name="Ovchinnikova G."/>
            <person name="Brettar I."/>
            <person name="Rodrigues J."/>
            <person name="Konstantinidis K."/>
            <person name="Tiedje J."/>
        </authorList>
    </citation>
    <scope>NUCLEOTIDE SEQUENCE [LARGE SCALE GENOMIC DNA]</scope>
    <source>
        <strain>OS223</strain>
    </source>
</reference>
<proteinExistence type="inferred from homology"/>
<feature type="chain" id="PRO_1000186341" description="Pyridoxine/pyridoxamine 5'-phosphate oxidase">
    <location>
        <begin position="1"/>
        <end position="212"/>
    </location>
</feature>
<feature type="binding site" evidence="1">
    <location>
        <begin position="8"/>
        <end position="11"/>
    </location>
    <ligand>
        <name>substrate</name>
    </ligand>
</feature>
<feature type="binding site" evidence="1">
    <location>
        <begin position="61"/>
        <end position="66"/>
    </location>
    <ligand>
        <name>FMN</name>
        <dbReference type="ChEBI" id="CHEBI:58210"/>
    </ligand>
</feature>
<feature type="binding site" evidence="1">
    <location>
        <position position="66"/>
    </location>
    <ligand>
        <name>substrate</name>
    </ligand>
</feature>
<feature type="binding site" evidence="1">
    <location>
        <begin position="76"/>
        <end position="77"/>
    </location>
    <ligand>
        <name>FMN</name>
        <dbReference type="ChEBI" id="CHEBI:58210"/>
    </ligand>
</feature>
<feature type="binding site" evidence="1">
    <location>
        <position position="82"/>
    </location>
    <ligand>
        <name>FMN</name>
        <dbReference type="ChEBI" id="CHEBI:58210"/>
    </ligand>
</feature>
<feature type="binding site" evidence="1">
    <location>
        <position position="83"/>
    </location>
    <ligand>
        <name>FMN</name>
        <dbReference type="ChEBI" id="CHEBI:58210"/>
    </ligand>
</feature>
<feature type="binding site" evidence="1">
    <location>
        <position position="105"/>
    </location>
    <ligand>
        <name>FMN</name>
        <dbReference type="ChEBI" id="CHEBI:58210"/>
    </ligand>
</feature>
<feature type="binding site" evidence="1">
    <location>
        <position position="123"/>
    </location>
    <ligand>
        <name>substrate</name>
    </ligand>
</feature>
<feature type="binding site" evidence="1">
    <location>
        <position position="127"/>
    </location>
    <ligand>
        <name>substrate</name>
    </ligand>
</feature>
<feature type="binding site" evidence="1">
    <location>
        <position position="131"/>
    </location>
    <ligand>
        <name>substrate</name>
    </ligand>
</feature>
<feature type="binding site" evidence="1">
    <location>
        <begin position="140"/>
        <end position="141"/>
    </location>
    <ligand>
        <name>FMN</name>
        <dbReference type="ChEBI" id="CHEBI:58210"/>
    </ligand>
</feature>
<feature type="binding site" evidence="1">
    <location>
        <position position="185"/>
    </location>
    <ligand>
        <name>FMN</name>
        <dbReference type="ChEBI" id="CHEBI:58210"/>
    </ligand>
</feature>
<feature type="binding site" evidence="1">
    <location>
        <begin position="191"/>
        <end position="193"/>
    </location>
    <ligand>
        <name>substrate</name>
    </ligand>
</feature>
<feature type="binding site" evidence="1">
    <location>
        <position position="195"/>
    </location>
    <ligand>
        <name>FMN</name>
        <dbReference type="ChEBI" id="CHEBI:58210"/>
    </ligand>
</feature>
<keyword id="KW-0285">Flavoprotein</keyword>
<keyword id="KW-0288">FMN</keyword>
<keyword id="KW-0560">Oxidoreductase</keyword>
<keyword id="KW-0664">Pyridoxine biosynthesis</keyword>
<evidence type="ECO:0000255" key="1">
    <source>
        <dbReference type="HAMAP-Rule" id="MF_01629"/>
    </source>
</evidence>
<comment type="function">
    <text evidence="1">Catalyzes the oxidation of either pyridoxine 5'-phosphate (PNP) or pyridoxamine 5'-phosphate (PMP) into pyridoxal 5'-phosphate (PLP).</text>
</comment>
<comment type="catalytic activity">
    <reaction evidence="1">
        <text>pyridoxamine 5'-phosphate + O2 + H2O = pyridoxal 5'-phosphate + H2O2 + NH4(+)</text>
        <dbReference type="Rhea" id="RHEA:15817"/>
        <dbReference type="ChEBI" id="CHEBI:15377"/>
        <dbReference type="ChEBI" id="CHEBI:15379"/>
        <dbReference type="ChEBI" id="CHEBI:16240"/>
        <dbReference type="ChEBI" id="CHEBI:28938"/>
        <dbReference type="ChEBI" id="CHEBI:58451"/>
        <dbReference type="ChEBI" id="CHEBI:597326"/>
        <dbReference type="EC" id="1.4.3.5"/>
    </reaction>
</comment>
<comment type="catalytic activity">
    <reaction evidence="1">
        <text>pyridoxine 5'-phosphate + O2 = pyridoxal 5'-phosphate + H2O2</text>
        <dbReference type="Rhea" id="RHEA:15149"/>
        <dbReference type="ChEBI" id="CHEBI:15379"/>
        <dbReference type="ChEBI" id="CHEBI:16240"/>
        <dbReference type="ChEBI" id="CHEBI:58589"/>
        <dbReference type="ChEBI" id="CHEBI:597326"/>
        <dbReference type="EC" id="1.4.3.5"/>
    </reaction>
</comment>
<comment type="cofactor">
    <cofactor evidence="1">
        <name>FMN</name>
        <dbReference type="ChEBI" id="CHEBI:58210"/>
    </cofactor>
    <text evidence="1">Binds 1 FMN per subunit.</text>
</comment>
<comment type="pathway">
    <text evidence="1">Cofactor metabolism; pyridoxal 5'-phosphate salvage; pyridoxal 5'-phosphate from pyridoxamine 5'-phosphate: step 1/1.</text>
</comment>
<comment type="pathway">
    <text evidence="1">Cofactor metabolism; pyridoxal 5'-phosphate salvage; pyridoxal 5'-phosphate from pyridoxine 5'-phosphate: step 1/1.</text>
</comment>
<comment type="subunit">
    <text evidence="1">Homodimer.</text>
</comment>
<comment type="similarity">
    <text evidence="1">Belongs to the pyridoxamine 5'-phosphate oxidase family.</text>
</comment>
<dbReference type="EC" id="1.4.3.5" evidence="1"/>
<dbReference type="EMBL" id="CP001252">
    <property type="protein sequence ID" value="ACK47009.1"/>
    <property type="molecule type" value="Genomic_DNA"/>
</dbReference>
<dbReference type="RefSeq" id="WP_012587871.1">
    <property type="nucleotide sequence ID" value="NC_011663.1"/>
</dbReference>
<dbReference type="SMR" id="B8EAI0"/>
<dbReference type="KEGG" id="sbp:Sbal223_2515"/>
<dbReference type="HOGENOM" id="CLU_032263_2_2_6"/>
<dbReference type="UniPathway" id="UPA01068">
    <property type="reaction ID" value="UER00304"/>
</dbReference>
<dbReference type="UniPathway" id="UPA01068">
    <property type="reaction ID" value="UER00305"/>
</dbReference>
<dbReference type="Proteomes" id="UP000002507">
    <property type="component" value="Chromosome"/>
</dbReference>
<dbReference type="GO" id="GO:0010181">
    <property type="term" value="F:FMN binding"/>
    <property type="evidence" value="ECO:0007669"/>
    <property type="project" value="UniProtKB-UniRule"/>
</dbReference>
<dbReference type="GO" id="GO:0004733">
    <property type="term" value="F:pyridoxamine phosphate oxidase activity"/>
    <property type="evidence" value="ECO:0007669"/>
    <property type="project" value="UniProtKB-UniRule"/>
</dbReference>
<dbReference type="GO" id="GO:0008615">
    <property type="term" value="P:pyridoxine biosynthetic process"/>
    <property type="evidence" value="ECO:0007669"/>
    <property type="project" value="UniProtKB-KW"/>
</dbReference>
<dbReference type="FunFam" id="2.30.110.10:FF:000001">
    <property type="entry name" value="Pyridoxine/pyridoxamine 5'-phosphate oxidase"/>
    <property type="match status" value="1"/>
</dbReference>
<dbReference type="Gene3D" id="2.30.110.10">
    <property type="entry name" value="Electron Transport, Fmn-binding Protein, Chain A"/>
    <property type="match status" value="1"/>
</dbReference>
<dbReference type="HAMAP" id="MF_01629">
    <property type="entry name" value="PdxH"/>
    <property type="match status" value="1"/>
</dbReference>
<dbReference type="InterPro" id="IPR000659">
    <property type="entry name" value="Pyridox_Oxase"/>
</dbReference>
<dbReference type="InterPro" id="IPR019740">
    <property type="entry name" value="Pyridox_Oxase_CS"/>
</dbReference>
<dbReference type="InterPro" id="IPR011576">
    <property type="entry name" value="Pyridox_Oxase_N"/>
</dbReference>
<dbReference type="InterPro" id="IPR019576">
    <property type="entry name" value="Pyridoxamine_oxidase_dimer_C"/>
</dbReference>
<dbReference type="InterPro" id="IPR012349">
    <property type="entry name" value="Split_barrel_FMN-bd"/>
</dbReference>
<dbReference type="NCBIfam" id="TIGR00558">
    <property type="entry name" value="pdxH"/>
    <property type="match status" value="1"/>
</dbReference>
<dbReference type="NCBIfam" id="NF004231">
    <property type="entry name" value="PRK05679.1"/>
    <property type="match status" value="1"/>
</dbReference>
<dbReference type="PANTHER" id="PTHR10851:SF0">
    <property type="entry name" value="PYRIDOXINE-5'-PHOSPHATE OXIDASE"/>
    <property type="match status" value="1"/>
</dbReference>
<dbReference type="PANTHER" id="PTHR10851">
    <property type="entry name" value="PYRIDOXINE-5-PHOSPHATE OXIDASE"/>
    <property type="match status" value="1"/>
</dbReference>
<dbReference type="Pfam" id="PF10590">
    <property type="entry name" value="PNP_phzG_C"/>
    <property type="match status" value="1"/>
</dbReference>
<dbReference type="Pfam" id="PF01243">
    <property type="entry name" value="PNPOx_N"/>
    <property type="match status" value="1"/>
</dbReference>
<dbReference type="PIRSF" id="PIRSF000190">
    <property type="entry name" value="Pyd_amn-ph_oxd"/>
    <property type="match status" value="1"/>
</dbReference>
<dbReference type="SUPFAM" id="SSF50475">
    <property type="entry name" value="FMN-binding split barrel"/>
    <property type="match status" value="1"/>
</dbReference>
<dbReference type="PROSITE" id="PS01064">
    <property type="entry name" value="PYRIDOX_OXIDASE"/>
    <property type="match status" value="1"/>
</dbReference>
<name>PDXH_SHEB2</name>
<organism>
    <name type="scientific">Shewanella baltica (strain OS223)</name>
    <dbReference type="NCBI Taxonomy" id="407976"/>
    <lineage>
        <taxon>Bacteria</taxon>
        <taxon>Pseudomonadati</taxon>
        <taxon>Pseudomonadota</taxon>
        <taxon>Gammaproteobacteria</taxon>
        <taxon>Alteromonadales</taxon>
        <taxon>Shewanellaceae</taxon>
        <taxon>Shewanella</taxon>
    </lineage>
</organism>
<gene>
    <name evidence="1" type="primary">pdxH</name>
    <name type="ordered locus">Sbal223_2515</name>
</gene>